<evidence type="ECO:0000250" key="1"/>
<evidence type="ECO:0000305" key="2"/>
<sequence length="87" mass="9688">MKAITTTQAKDHLDELINAVISDLEPTIVSNNQGQQAVLISLDEFNSWQETLYLLSNPTNAEHLMASIKQAETGQIIKQKLPDLLEL</sequence>
<protein>
    <recommendedName>
        <fullName>Antitoxin YefM</fullName>
    </recommendedName>
</protein>
<proteinExistence type="inferred from homology"/>
<name>YEFM_SYNY3</name>
<organism>
    <name type="scientific">Synechocystis sp. (strain ATCC 27184 / PCC 6803 / Kazusa)</name>
    <dbReference type="NCBI Taxonomy" id="1111708"/>
    <lineage>
        <taxon>Bacteria</taxon>
        <taxon>Bacillati</taxon>
        <taxon>Cyanobacteriota</taxon>
        <taxon>Cyanophyceae</taxon>
        <taxon>Synechococcales</taxon>
        <taxon>Merismopediaceae</taxon>
        <taxon>Synechocystis</taxon>
    </lineage>
</organism>
<feature type="chain" id="PRO_0000213745" description="Antitoxin YefM">
    <location>
        <begin position="1"/>
        <end position="87"/>
    </location>
</feature>
<accession>P58235</accession>
<dbReference type="EMBL" id="BA000022">
    <property type="protein sequence ID" value="BAB61866.1"/>
    <property type="molecule type" value="Genomic_DNA"/>
</dbReference>
<dbReference type="SMR" id="P58235"/>
<dbReference type="IntAct" id="P58235">
    <property type="interactions" value="1"/>
</dbReference>
<dbReference type="STRING" id="1148.gene:10499343"/>
<dbReference type="PaxDb" id="1148-14595112"/>
<dbReference type="EnsemblBacteria" id="BAB61866">
    <property type="protein sequence ID" value="BAB61866"/>
    <property type="gene ID" value="BAB61866"/>
</dbReference>
<dbReference type="KEGG" id="syn:ssr2754"/>
<dbReference type="eggNOG" id="COG2161">
    <property type="taxonomic scope" value="Bacteria"/>
</dbReference>
<dbReference type="InParanoid" id="P58235"/>
<dbReference type="PhylomeDB" id="P58235"/>
<dbReference type="Proteomes" id="UP000001425">
    <property type="component" value="Chromosome"/>
</dbReference>
<dbReference type="GO" id="GO:0003700">
    <property type="term" value="F:DNA-binding transcription factor activity"/>
    <property type="evidence" value="ECO:0000318"/>
    <property type="project" value="GO_Central"/>
</dbReference>
<dbReference type="GO" id="GO:0043565">
    <property type="term" value="F:sequence-specific DNA binding"/>
    <property type="evidence" value="ECO:0000318"/>
    <property type="project" value="GO_Central"/>
</dbReference>
<dbReference type="GO" id="GO:0006355">
    <property type="term" value="P:regulation of DNA-templated transcription"/>
    <property type="evidence" value="ECO:0000318"/>
    <property type="project" value="GO_Central"/>
</dbReference>
<dbReference type="Gene3D" id="6.10.250.330">
    <property type="match status" value="1"/>
</dbReference>
<dbReference type="Gene3D" id="3.40.1620.10">
    <property type="entry name" value="YefM-like domain"/>
    <property type="match status" value="1"/>
</dbReference>
<dbReference type="InterPro" id="IPR006442">
    <property type="entry name" value="Antitoxin_Phd/YefM"/>
</dbReference>
<dbReference type="InterPro" id="IPR051405">
    <property type="entry name" value="phD/YefM_antitoxin"/>
</dbReference>
<dbReference type="InterPro" id="IPR036165">
    <property type="entry name" value="YefM-like_sf"/>
</dbReference>
<dbReference type="NCBIfam" id="TIGR01552">
    <property type="entry name" value="phd_fam"/>
    <property type="match status" value="1"/>
</dbReference>
<dbReference type="PANTHER" id="PTHR33713">
    <property type="entry name" value="ANTITOXIN YAFN-RELATED"/>
    <property type="match status" value="1"/>
</dbReference>
<dbReference type="PANTHER" id="PTHR33713:SF6">
    <property type="entry name" value="ANTITOXIN YEFM"/>
    <property type="match status" value="1"/>
</dbReference>
<dbReference type="Pfam" id="PF02604">
    <property type="entry name" value="PhdYeFM_antitox"/>
    <property type="match status" value="1"/>
</dbReference>
<dbReference type="SUPFAM" id="SSF143120">
    <property type="entry name" value="YefM-like"/>
    <property type="match status" value="1"/>
</dbReference>
<reference key="1">
    <citation type="journal article" date="1995" name="DNA Res.">
        <title>Sequence analysis of the genome of the unicellular cyanobacterium Synechocystis sp. strain PCC6803. I. Sequence features in the 1 Mb region from map positions 64% to 92% of the genome.</title>
        <authorList>
            <person name="Kaneko T."/>
            <person name="Tanaka A."/>
            <person name="Sato S."/>
            <person name="Kotani H."/>
            <person name="Sazuka T."/>
            <person name="Miyajima N."/>
            <person name="Sugiura M."/>
            <person name="Tabata S."/>
        </authorList>
    </citation>
    <scope>NUCLEOTIDE SEQUENCE [LARGE SCALE GENOMIC DNA]</scope>
    <source>
        <strain>ATCC 27184 / PCC 6803 / N-1</strain>
    </source>
</reference>
<reference key="2">
    <citation type="journal article" date="1996" name="DNA Res.">
        <title>Sequence analysis of the genome of the unicellular cyanobacterium Synechocystis sp. strain PCC6803. II. Sequence determination of the entire genome and assignment of potential protein-coding regions.</title>
        <authorList>
            <person name="Kaneko T."/>
            <person name="Sato S."/>
            <person name="Kotani H."/>
            <person name="Tanaka A."/>
            <person name="Asamizu E."/>
            <person name="Nakamura Y."/>
            <person name="Miyajima N."/>
            <person name="Hirosawa M."/>
            <person name="Sugiura M."/>
            <person name="Sasamoto S."/>
            <person name="Kimura T."/>
            <person name="Hosouchi T."/>
            <person name="Matsuno A."/>
            <person name="Muraki A."/>
            <person name="Nakazaki N."/>
            <person name="Naruo K."/>
            <person name="Okumura S."/>
            <person name="Shimpo S."/>
            <person name="Takeuchi C."/>
            <person name="Wada T."/>
            <person name="Watanabe A."/>
            <person name="Yamada M."/>
            <person name="Yasuda M."/>
            <person name="Tabata S."/>
        </authorList>
    </citation>
    <scope>NUCLEOTIDE SEQUENCE [LARGE SCALE GENOMIC DNA]</scope>
    <source>
        <strain>ATCC 27184 / PCC 6803 / Kazusa</strain>
    </source>
</reference>
<gene>
    <name type="primary">yefM</name>
    <name type="ordered locus">ssr2754</name>
</gene>
<keyword id="KW-1185">Reference proteome</keyword>
<keyword id="KW-1277">Toxin-antitoxin system</keyword>
<comment type="function">
    <text evidence="1">Antitoxin component of a type II toxin-antitoxin (TA) system. A probable antitoxin for the putative mRNA interferase YeoB (By similarity).</text>
</comment>
<comment type="subunit">
    <text evidence="1">Forms a complex with YoeB which inhibits its toxin activity.</text>
</comment>
<comment type="similarity">
    <text evidence="2">Belongs to the phD/YefM antitoxin family.</text>
</comment>